<name>RNBR_SHEEP</name>
<dbReference type="EC" id="3.1.27.-"/>
<dbReference type="EMBL" id="S81745">
    <property type="protein sequence ID" value="AAB36139.1"/>
    <property type="molecule type" value="Genomic_DNA"/>
</dbReference>
<dbReference type="SMR" id="Q29543"/>
<dbReference type="STRING" id="9940.ENSOARP00000021182"/>
<dbReference type="GlyCosmos" id="Q29543">
    <property type="glycosylation" value="3 sites, No reported glycans"/>
</dbReference>
<dbReference type="PaxDb" id="9940-ENSOARP00000021182"/>
<dbReference type="eggNOG" id="ENOG502SQ4K">
    <property type="taxonomic scope" value="Eukaryota"/>
</dbReference>
<dbReference type="Proteomes" id="UP000002356">
    <property type="component" value="Unplaced"/>
</dbReference>
<dbReference type="GO" id="GO:0005576">
    <property type="term" value="C:extracellular region"/>
    <property type="evidence" value="ECO:0007669"/>
    <property type="project" value="UniProtKB-SubCell"/>
</dbReference>
<dbReference type="GO" id="GO:0004519">
    <property type="term" value="F:endonuclease activity"/>
    <property type="evidence" value="ECO:0007669"/>
    <property type="project" value="UniProtKB-KW"/>
</dbReference>
<dbReference type="GO" id="GO:0003676">
    <property type="term" value="F:nucleic acid binding"/>
    <property type="evidence" value="ECO:0007669"/>
    <property type="project" value="InterPro"/>
</dbReference>
<dbReference type="GO" id="GO:0004540">
    <property type="term" value="F:RNA nuclease activity"/>
    <property type="evidence" value="ECO:0007669"/>
    <property type="project" value="TreeGrafter"/>
</dbReference>
<dbReference type="GO" id="GO:0050830">
    <property type="term" value="P:defense response to Gram-positive bacterium"/>
    <property type="evidence" value="ECO:0007669"/>
    <property type="project" value="TreeGrafter"/>
</dbReference>
<dbReference type="CDD" id="cd06265">
    <property type="entry name" value="RNase_A_canonical"/>
    <property type="match status" value="1"/>
</dbReference>
<dbReference type="FunFam" id="3.10.130.10:FF:000001">
    <property type="entry name" value="Ribonuclease pancreatic"/>
    <property type="match status" value="1"/>
</dbReference>
<dbReference type="Gene3D" id="3.10.130.10">
    <property type="entry name" value="Ribonuclease A-like domain"/>
    <property type="match status" value="1"/>
</dbReference>
<dbReference type="InterPro" id="IPR001427">
    <property type="entry name" value="RNaseA"/>
</dbReference>
<dbReference type="InterPro" id="IPR036816">
    <property type="entry name" value="RNaseA-like_dom_sf"/>
</dbReference>
<dbReference type="InterPro" id="IPR023411">
    <property type="entry name" value="RNaseA_AS"/>
</dbReference>
<dbReference type="InterPro" id="IPR023412">
    <property type="entry name" value="RNaseA_domain"/>
</dbReference>
<dbReference type="PANTHER" id="PTHR11437">
    <property type="entry name" value="RIBONUCLEASE"/>
    <property type="match status" value="1"/>
</dbReference>
<dbReference type="PANTHER" id="PTHR11437:SF24">
    <property type="entry name" value="RIBONUCLEASE PANCREATIC"/>
    <property type="match status" value="1"/>
</dbReference>
<dbReference type="Pfam" id="PF00074">
    <property type="entry name" value="RnaseA"/>
    <property type="match status" value="1"/>
</dbReference>
<dbReference type="PRINTS" id="PR00794">
    <property type="entry name" value="RIBONUCLEASE"/>
</dbReference>
<dbReference type="SMART" id="SM00092">
    <property type="entry name" value="RNAse_Pc"/>
    <property type="match status" value="1"/>
</dbReference>
<dbReference type="SUPFAM" id="SSF54076">
    <property type="entry name" value="RNase A-like"/>
    <property type="match status" value="1"/>
</dbReference>
<dbReference type="PROSITE" id="PS00127">
    <property type="entry name" value="RNASE_PANCREATIC"/>
    <property type="match status" value="1"/>
</dbReference>
<proteinExistence type="inferred from homology"/>
<feature type="chain" id="PRO_0000057168" description="Brain ribonuclease">
    <location>
        <begin position="1"/>
        <end position="143"/>
    </location>
</feature>
<feature type="region of interest" description="Disordered" evidence="2">
    <location>
        <begin position="1"/>
        <end position="21"/>
    </location>
</feature>
<feature type="active site" description="Proton acceptor" evidence="1">
    <location>
        <position position="12"/>
    </location>
</feature>
<feature type="active site" description="Proton donor" evidence="1">
    <location>
        <position position="119"/>
    </location>
</feature>
<feature type="binding site" evidence="1">
    <location>
        <position position="7"/>
    </location>
    <ligand>
        <name>substrate</name>
    </ligand>
</feature>
<feature type="binding site" evidence="1">
    <location>
        <position position="10"/>
    </location>
    <ligand>
        <name>substrate</name>
    </ligand>
</feature>
<feature type="binding site" evidence="1">
    <location>
        <begin position="41"/>
        <end position="45"/>
    </location>
    <ligand>
        <name>substrate</name>
    </ligand>
</feature>
<feature type="binding site" evidence="1">
    <location>
        <position position="66"/>
    </location>
    <ligand>
        <name>substrate</name>
    </ligand>
</feature>
<feature type="binding site" evidence="1">
    <location>
        <position position="85"/>
    </location>
    <ligand>
        <name>substrate</name>
    </ligand>
</feature>
<feature type="glycosylation site" description="N-linked (GlcNAc...) asparagine" evidence="1">
    <location>
        <position position="62"/>
    </location>
</feature>
<feature type="glycosylation site" description="O-linked (GalNAc...) threonine" evidence="1">
    <location>
        <position position="129"/>
    </location>
</feature>
<feature type="glycosylation site" description="O-linked (GalNAc...) serine" evidence="1">
    <location>
        <position position="133"/>
    </location>
</feature>
<feature type="disulfide bond" evidence="1">
    <location>
        <begin position="26"/>
        <end position="84"/>
    </location>
</feature>
<feature type="disulfide bond" evidence="1">
    <location>
        <begin position="40"/>
        <end position="95"/>
    </location>
</feature>
<feature type="disulfide bond" evidence="1">
    <location>
        <begin position="58"/>
        <end position="110"/>
    </location>
</feature>
<feature type="disulfide bond" evidence="1">
    <location>
        <begin position="65"/>
        <end position="72"/>
    </location>
</feature>
<organism>
    <name type="scientific">Ovis aries</name>
    <name type="common">Sheep</name>
    <dbReference type="NCBI Taxonomy" id="9940"/>
    <lineage>
        <taxon>Eukaryota</taxon>
        <taxon>Metazoa</taxon>
        <taxon>Chordata</taxon>
        <taxon>Craniata</taxon>
        <taxon>Vertebrata</taxon>
        <taxon>Euteleostomi</taxon>
        <taxon>Mammalia</taxon>
        <taxon>Eutheria</taxon>
        <taxon>Laurasiatheria</taxon>
        <taxon>Artiodactyla</taxon>
        <taxon>Ruminantia</taxon>
        <taxon>Pecora</taxon>
        <taxon>Bovidae</taxon>
        <taxon>Caprinae</taxon>
        <taxon>Ovis</taxon>
    </lineage>
</organism>
<accession>Q29543</accession>
<comment type="subcellular location">
    <subcellularLocation>
        <location>Secreted</location>
    </subcellularLocation>
</comment>
<comment type="similarity">
    <text evidence="3">Belongs to the pancreatic ribonuclease family.</text>
</comment>
<protein>
    <recommendedName>
        <fullName>Brain ribonuclease</fullName>
        <shortName>BRB</shortName>
        <ecNumber>3.1.27.-</ecNumber>
    </recommendedName>
</protein>
<gene>
    <name type="primary">BRN</name>
</gene>
<sequence>KESAAAKFRRQHMDSGSSSSGNSNYCNLMMKRRRMTHGRCKPVNTFVHESLDDVKAVCSQKNITCKNGQPNCYQSNSTMNITDCRETGGSKYPNCAYKTSQKQKYITVACEGNPYVPVHFDGAVLLPATPLPSLPPPHKRRLL</sequence>
<evidence type="ECO:0000250" key="1"/>
<evidence type="ECO:0000256" key="2">
    <source>
        <dbReference type="SAM" id="MobiDB-lite"/>
    </source>
</evidence>
<evidence type="ECO:0000305" key="3"/>
<reference key="1">
    <citation type="journal article" date="1995" name="J. Mol. Evol.">
        <title>Molecular evolution of genes encoding ribonucleases in ruminant species.</title>
        <authorList>
            <person name="Confalone E."/>
            <person name="Beintema J.J."/>
            <person name="Sasso M.P."/>
            <person name="Carsana A."/>
            <person name="Palmieri M."/>
            <person name="Vento M.T."/>
            <person name="Furia A."/>
        </authorList>
    </citation>
    <scope>NUCLEOTIDE SEQUENCE [GENOMIC DNA]</scope>
</reference>
<keyword id="KW-1015">Disulfide bond</keyword>
<keyword id="KW-0255">Endonuclease</keyword>
<keyword id="KW-0325">Glycoprotein</keyword>
<keyword id="KW-0378">Hydrolase</keyword>
<keyword id="KW-0540">Nuclease</keyword>
<keyword id="KW-1185">Reference proteome</keyword>
<keyword id="KW-0964">Secreted</keyword>